<protein>
    <recommendedName>
        <fullName evidence="1">Biotin synthase</fullName>
        <ecNumber evidence="1">2.8.1.6</ecNumber>
    </recommendedName>
</protein>
<proteinExistence type="inferred from homology"/>
<feature type="chain" id="PRO_0000185547" description="Biotin synthase">
    <location>
        <begin position="1"/>
        <end position="343"/>
    </location>
</feature>
<feature type="domain" description="Radical SAM core" evidence="2">
    <location>
        <begin position="36"/>
        <end position="254"/>
    </location>
</feature>
<feature type="binding site" evidence="1">
    <location>
        <position position="51"/>
    </location>
    <ligand>
        <name>[4Fe-4S] cluster</name>
        <dbReference type="ChEBI" id="CHEBI:49883"/>
        <note>4Fe-4S-S-AdoMet</note>
    </ligand>
</feature>
<feature type="binding site" evidence="1">
    <location>
        <position position="55"/>
    </location>
    <ligand>
        <name>[4Fe-4S] cluster</name>
        <dbReference type="ChEBI" id="CHEBI:49883"/>
        <note>4Fe-4S-S-AdoMet</note>
    </ligand>
</feature>
<feature type="binding site" evidence="1">
    <location>
        <position position="58"/>
    </location>
    <ligand>
        <name>[4Fe-4S] cluster</name>
        <dbReference type="ChEBI" id="CHEBI:49883"/>
        <note>4Fe-4S-S-AdoMet</note>
    </ligand>
</feature>
<feature type="binding site" evidence="1">
    <location>
        <position position="95"/>
    </location>
    <ligand>
        <name>[2Fe-2S] cluster</name>
        <dbReference type="ChEBI" id="CHEBI:190135"/>
    </ligand>
</feature>
<feature type="binding site" evidence="1">
    <location>
        <position position="126"/>
    </location>
    <ligand>
        <name>[2Fe-2S] cluster</name>
        <dbReference type="ChEBI" id="CHEBI:190135"/>
    </ligand>
</feature>
<feature type="binding site" evidence="1">
    <location>
        <position position="186"/>
    </location>
    <ligand>
        <name>[2Fe-2S] cluster</name>
        <dbReference type="ChEBI" id="CHEBI:190135"/>
    </ligand>
</feature>
<feature type="binding site" evidence="1">
    <location>
        <position position="258"/>
    </location>
    <ligand>
        <name>[2Fe-2S] cluster</name>
        <dbReference type="ChEBI" id="CHEBI:190135"/>
    </ligand>
</feature>
<reference key="1">
    <citation type="journal article" date="2000" name="Nature">
        <title>Genome sequence of the endocellular bacterial symbiont of aphids Buchnera sp. APS.</title>
        <authorList>
            <person name="Shigenobu S."/>
            <person name="Watanabe H."/>
            <person name="Hattori M."/>
            <person name="Sakaki Y."/>
            <person name="Ishikawa H."/>
        </authorList>
    </citation>
    <scope>NUCLEOTIDE SEQUENCE [LARGE SCALE GENOMIC DNA]</scope>
    <source>
        <strain>APS</strain>
    </source>
</reference>
<organism>
    <name type="scientific">Buchnera aphidicola subsp. Acyrthosiphon pisum (strain APS)</name>
    <name type="common">Acyrthosiphon pisum symbiotic bacterium</name>
    <dbReference type="NCBI Taxonomy" id="107806"/>
    <lineage>
        <taxon>Bacteria</taxon>
        <taxon>Pseudomonadati</taxon>
        <taxon>Pseudomonadota</taxon>
        <taxon>Gammaproteobacteria</taxon>
        <taxon>Enterobacterales</taxon>
        <taxon>Erwiniaceae</taxon>
        <taxon>Buchnera</taxon>
    </lineage>
</organism>
<accession>P57378</accession>
<comment type="function">
    <text evidence="1">Catalyzes the conversion of dethiobiotin (DTB) to biotin by the insertion of a sulfur atom into dethiobiotin via a radical-based mechanism.</text>
</comment>
<comment type="catalytic activity">
    <reaction evidence="1">
        <text>(4R,5S)-dethiobiotin + (sulfur carrier)-SH + 2 reduced [2Fe-2S]-[ferredoxin] + 2 S-adenosyl-L-methionine = (sulfur carrier)-H + biotin + 2 5'-deoxyadenosine + 2 L-methionine + 2 oxidized [2Fe-2S]-[ferredoxin]</text>
        <dbReference type="Rhea" id="RHEA:22060"/>
        <dbReference type="Rhea" id="RHEA-COMP:10000"/>
        <dbReference type="Rhea" id="RHEA-COMP:10001"/>
        <dbReference type="Rhea" id="RHEA-COMP:14737"/>
        <dbReference type="Rhea" id="RHEA-COMP:14739"/>
        <dbReference type="ChEBI" id="CHEBI:17319"/>
        <dbReference type="ChEBI" id="CHEBI:29917"/>
        <dbReference type="ChEBI" id="CHEBI:33737"/>
        <dbReference type="ChEBI" id="CHEBI:33738"/>
        <dbReference type="ChEBI" id="CHEBI:57586"/>
        <dbReference type="ChEBI" id="CHEBI:57844"/>
        <dbReference type="ChEBI" id="CHEBI:59789"/>
        <dbReference type="ChEBI" id="CHEBI:64428"/>
        <dbReference type="ChEBI" id="CHEBI:149473"/>
        <dbReference type="EC" id="2.8.1.6"/>
    </reaction>
</comment>
<comment type="cofactor">
    <cofactor evidence="1">
        <name>[4Fe-4S] cluster</name>
        <dbReference type="ChEBI" id="CHEBI:49883"/>
    </cofactor>
    <text evidence="1">Binds 1 [4Fe-4S] cluster. The cluster is coordinated with 3 cysteines and an exchangeable S-adenosyl-L-methionine.</text>
</comment>
<comment type="cofactor">
    <cofactor evidence="1">
        <name>[2Fe-2S] cluster</name>
        <dbReference type="ChEBI" id="CHEBI:190135"/>
    </cofactor>
    <text evidence="1">Binds 1 [2Fe-2S] cluster. The cluster is coordinated with 3 cysteines and 1 arginine.</text>
</comment>
<comment type="pathway">
    <text evidence="1">Cofactor biosynthesis; biotin biosynthesis; biotin from 7,8-diaminononanoate: step 2/2.</text>
</comment>
<comment type="subunit">
    <text evidence="1">Homodimer.</text>
</comment>
<comment type="similarity">
    <text evidence="1">Belongs to the radical SAM superfamily. Biotin synthase family.</text>
</comment>
<gene>
    <name evidence="1" type="primary">bioB</name>
    <name type="ordered locus">BU291</name>
</gene>
<evidence type="ECO:0000255" key="1">
    <source>
        <dbReference type="HAMAP-Rule" id="MF_01694"/>
    </source>
</evidence>
<evidence type="ECO:0000255" key="2">
    <source>
        <dbReference type="PROSITE-ProRule" id="PRU01266"/>
    </source>
</evidence>
<name>BIOB_BUCAI</name>
<dbReference type="EC" id="2.8.1.6" evidence="1"/>
<dbReference type="EMBL" id="BA000003">
    <property type="protein sequence ID" value="BAB13001.1"/>
    <property type="molecule type" value="Genomic_DNA"/>
</dbReference>
<dbReference type="RefSeq" id="NP_240115.1">
    <property type="nucleotide sequence ID" value="NC_002528.1"/>
</dbReference>
<dbReference type="RefSeq" id="WP_010896051.1">
    <property type="nucleotide sequence ID" value="NC_002528.1"/>
</dbReference>
<dbReference type="SMR" id="P57378"/>
<dbReference type="STRING" id="563178.BUAP5A_286"/>
<dbReference type="EnsemblBacteria" id="BAB13001">
    <property type="protein sequence ID" value="BAB13001"/>
    <property type="gene ID" value="BAB13001"/>
</dbReference>
<dbReference type="KEGG" id="buc:BU291"/>
<dbReference type="PATRIC" id="fig|107806.10.peg.301"/>
<dbReference type="eggNOG" id="COG0502">
    <property type="taxonomic scope" value="Bacteria"/>
</dbReference>
<dbReference type="HOGENOM" id="CLU_033172_1_2_6"/>
<dbReference type="UniPathway" id="UPA00078">
    <property type="reaction ID" value="UER00162"/>
</dbReference>
<dbReference type="Proteomes" id="UP000001806">
    <property type="component" value="Chromosome"/>
</dbReference>
<dbReference type="GO" id="GO:0051537">
    <property type="term" value="F:2 iron, 2 sulfur cluster binding"/>
    <property type="evidence" value="ECO:0007669"/>
    <property type="project" value="UniProtKB-KW"/>
</dbReference>
<dbReference type="GO" id="GO:0051539">
    <property type="term" value="F:4 iron, 4 sulfur cluster binding"/>
    <property type="evidence" value="ECO:0007669"/>
    <property type="project" value="UniProtKB-KW"/>
</dbReference>
<dbReference type="GO" id="GO:0004076">
    <property type="term" value="F:biotin synthase activity"/>
    <property type="evidence" value="ECO:0007669"/>
    <property type="project" value="UniProtKB-UniRule"/>
</dbReference>
<dbReference type="GO" id="GO:0005506">
    <property type="term" value="F:iron ion binding"/>
    <property type="evidence" value="ECO:0007669"/>
    <property type="project" value="UniProtKB-UniRule"/>
</dbReference>
<dbReference type="GO" id="GO:0009102">
    <property type="term" value="P:biotin biosynthetic process"/>
    <property type="evidence" value="ECO:0007669"/>
    <property type="project" value="UniProtKB-UniRule"/>
</dbReference>
<dbReference type="CDD" id="cd01335">
    <property type="entry name" value="Radical_SAM"/>
    <property type="match status" value="1"/>
</dbReference>
<dbReference type="FunFam" id="3.20.20.70:FF:000011">
    <property type="entry name" value="Biotin synthase"/>
    <property type="match status" value="1"/>
</dbReference>
<dbReference type="Gene3D" id="3.20.20.70">
    <property type="entry name" value="Aldolase class I"/>
    <property type="match status" value="1"/>
</dbReference>
<dbReference type="HAMAP" id="MF_01694">
    <property type="entry name" value="BioB"/>
    <property type="match status" value="1"/>
</dbReference>
<dbReference type="InterPro" id="IPR013785">
    <property type="entry name" value="Aldolase_TIM"/>
</dbReference>
<dbReference type="InterPro" id="IPR010722">
    <property type="entry name" value="BATS_dom"/>
</dbReference>
<dbReference type="InterPro" id="IPR002684">
    <property type="entry name" value="Biotin_synth/BioAB"/>
</dbReference>
<dbReference type="InterPro" id="IPR024177">
    <property type="entry name" value="Biotin_synthase"/>
</dbReference>
<dbReference type="InterPro" id="IPR006638">
    <property type="entry name" value="Elp3/MiaA/NifB-like_rSAM"/>
</dbReference>
<dbReference type="InterPro" id="IPR007197">
    <property type="entry name" value="rSAM"/>
</dbReference>
<dbReference type="NCBIfam" id="TIGR00433">
    <property type="entry name" value="bioB"/>
    <property type="match status" value="1"/>
</dbReference>
<dbReference type="PANTHER" id="PTHR22976">
    <property type="entry name" value="BIOTIN SYNTHASE"/>
    <property type="match status" value="1"/>
</dbReference>
<dbReference type="PANTHER" id="PTHR22976:SF2">
    <property type="entry name" value="BIOTIN SYNTHASE, MITOCHONDRIAL"/>
    <property type="match status" value="1"/>
</dbReference>
<dbReference type="Pfam" id="PF06968">
    <property type="entry name" value="BATS"/>
    <property type="match status" value="1"/>
</dbReference>
<dbReference type="Pfam" id="PF04055">
    <property type="entry name" value="Radical_SAM"/>
    <property type="match status" value="1"/>
</dbReference>
<dbReference type="PIRSF" id="PIRSF001619">
    <property type="entry name" value="Biotin_synth"/>
    <property type="match status" value="1"/>
</dbReference>
<dbReference type="SFLD" id="SFLDF00272">
    <property type="entry name" value="biotin_synthase"/>
    <property type="match status" value="1"/>
</dbReference>
<dbReference type="SFLD" id="SFLDG01278">
    <property type="entry name" value="biotin_synthase_like"/>
    <property type="match status" value="1"/>
</dbReference>
<dbReference type="SMART" id="SM00876">
    <property type="entry name" value="BATS"/>
    <property type="match status" value="1"/>
</dbReference>
<dbReference type="SMART" id="SM00729">
    <property type="entry name" value="Elp3"/>
    <property type="match status" value="1"/>
</dbReference>
<dbReference type="SUPFAM" id="SSF102114">
    <property type="entry name" value="Radical SAM enzymes"/>
    <property type="match status" value="1"/>
</dbReference>
<dbReference type="PROSITE" id="PS51918">
    <property type="entry name" value="RADICAL_SAM"/>
    <property type="match status" value="1"/>
</dbReference>
<keyword id="KW-0001">2Fe-2S</keyword>
<keyword id="KW-0004">4Fe-4S</keyword>
<keyword id="KW-0093">Biotin biosynthesis</keyword>
<keyword id="KW-0408">Iron</keyword>
<keyword id="KW-0411">Iron-sulfur</keyword>
<keyword id="KW-0479">Metal-binding</keyword>
<keyword id="KW-1185">Reference proteome</keyword>
<keyword id="KW-0949">S-adenosyl-L-methionine</keyword>
<keyword id="KW-0808">Transferase</keyword>
<sequence length="343" mass="39213">MKKKWTLEETKMLFKKPFFNLMFQAQEEHRKNFDPNTIQISTLLSIKTGSCPEDCKYCPQSSRYKTGLKKEPLLEIEQILSAAKKAKDSGSSRFCMGAAWKNPKEKDMPYLEEIIKKIKEMGMETCMTLGTLNSTQAKKLADAGLDFYNHNLDTSKNFYNNIITTRTYQERLHTLHAVRSSGMKVCSGGIIGLGEKKQDRIELLMELSNLSIQPESVPINMLVKIPGTPMADNKDVEPFDFIRIIAVARIMMPKSYIRLSAGRHKMNDQTQAMCFMAGANSIFYGCKLLTSDNPEEKHDLELFKKLDLIPENKTQTLLKEDEYKTIIKSSKIKKDQYYNAAII</sequence>